<keyword id="KW-0156">Chromatin regulator</keyword>
<keyword id="KW-0524">Neurogenesis</keyword>
<keyword id="KW-0539">Nucleus</keyword>
<keyword id="KW-1185">Reference proteome</keyword>
<keyword id="KW-0804">Transcription</keyword>
<keyword id="KW-0805">Transcription regulation</keyword>
<name>ACL6B_BOVIN</name>
<sequence>MSGGVYGGDEVGALVFDIGSFSVRAGYAGEDCPKADFPTTVGLLAAEEGGGLELEGEKEKKGKIFHIDTNALHVPRDGAEVMSPLKNGMIEDWECFRAILDHTYSKHVKSEPNLHPVLMSEAPWNTRAKREKLTELMFEQYNIPAFFLCKTAVLTAFANGRSTGLVLDSGATHTTAIPVHDGYVLQQGIVKSPLAGDFISMQCRELFQEMAIDIIPPYMIAAKEPVREGAPPNWKKKEKLPQVSKSWHNYMCNEVIQDFQASVLQVSDSPYDEQVAAQMPTVHYEMPNGYNTDYGAERLRIPEGLFDPSNVKGLSGNTMLGVGHVVTTSIGMCDIDIRPGLYGSVIVTGGNTLLQGFTDRLNRELSQKTPPSMRLKLIASNSTMERKFSPWIGGSILASLGTFQQMWISKQEYEEGGKQCVERKCP</sequence>
<accession>A4FUX8</accession>
<proteinExistence type="evidence at transcript level"/>
<feature type="chain" id="PRO_0000379517" description="Actin-like protein 6B">
    <location>
        <begin position="1"/>
        <end position="426"/>
    </location>
</feature>
<feature type="region of interest" description="Essential for mediating its function in dendritic development; may contribute to neuronal-specific targeting" evidence="2">
    <location>
        <begin position="39"/>
        <end position="82"/>
    </location>
</feature>
<dbReference type="EMBL" id="BC123419">
    <property type="protein sequence ID" value="AAI23420.1"/>
    <property type="molecule type" value="mRNA"/>
</dbReference>
<dbReference type="RefSeq" id="NP_001076839.1">
    <property type="nucleotide sequence ID" value="NM_001083370.1"/>
</dbReference>
<dbReference type="SMR" id="A4FUX8"/>
<dbReference type="FunCoup" id="A4FUX8">
    <property type="interactions" value="1286"/>
</dbReference>
<dbReference type="STRING" id="9913.ENSBTAP00000037066"/>
<dbReference type="PaxDb" id="9913-ENSBTAP00000010915"/>
<dbReference type="Ensembl" id="ENSBTAT00000010915.7">
    <property type="protein sequence ID" value="ENSBTAP00000010915.5"/>
    <property type="gene ID" value="ENSBTAG00000008295.7"/>
</dbReference>
<dbReference type="GeneID" id="504476"/>
<dbReference type="KEGG" id="bta:504476"/>
<dbReference type="CTD" id="51412"/>
<dbReference type="VEuPathDB" id="HostDB:ENSBTAG00000008295"/>
<dbReference type="VGNC" id="VGNC:25576">
    <property type="gene designation" value="ACTL6B"/>
</dbReference>
<dbReference type="eggNOG" id="KOG0679">
    <property type="taxonomic scope" value="Eukaryota"/>
</dbReference>
<dbReference type="GeneTree" id="ENSGT00940000160860"/>
<dbReference type="HOGENOM" id="CLU_027965_6_0_1"/>
<dbReference type="InParanoid" id="A4FUX8"/>
<dbReference type="OMA" id="SKSWHSY"/>
<dbReference type="OrthoDB" id="5132116at2759"/>
<dbReference type="TreeFam" id="TF312863"/>
<dbReference type="Reactome" id="R-BTA-3214858">
    <property type="pathway name" value="RMTs methylate histone arginines"/>
</dbReference>
<dbReference type="Reactome" id="R-BTA-8939243">
    <property type="pathway name" value="RUNX1 interacts with co-factors whose precise effect on RUNX1 targets is not known"/>
</dbReference>
<dbReference type="Proteomes" id="UP000009136">
    <property type="component" value="Chromosome 25"/>
</dbReference>
<dbReference type="Bgee" id="ENSBTAG00000008295">
    <property type="expression patterns" value="Expressed in adenohypophysis and 50 other cell types or tissues"/>
</dbReference>
<dbReference type="GO" id="GO:0071565">
    <property type="term" value="C:nBAF complex"/>
    <property type="evidence" value="ECO:0000250"/>
    <property type="project" value="UniProtKB"/>
</dbReference>
<dbReference type="GO" id="GO:0035267">
    <property type="term" value="C:NuA4 histone acetyltransferase complex"/>
    <property type="evidence" value="ECO:0000318"/>
    <property type="project" value="GO_Central"/>
</dbReference>
<dbReference type="GO" id="GO:0016514">
    <property type="term" value="C:SWI/SNF complex"/>
    <property type="evidence" value="ECO:0000318"/>
    <property type="project" value="GO_Central"/>
</dbReference>
<dbReference type="GO" id="GO:0003682">
    <property type="term" value="F:chromatin binding"/>
    <property type="evidence" value="ECO:0000318"/>
    <property type="project" value="GO_Central"/>
</dbReference>
<dbReference type="GO" id="GO:0006338">
    <property type="term" value="P:chromatin remodeling"/>
    <property type="evidence" value="ECO:0000318"/>
    <property type="project" value="GO_Central"/>
</dbReference>
<dbReference type="GO" id="GO:0016358">
    <property type="term" value="P:dendrite development"/>
    <property type="evidence" value="ECO:0000250"/>
    <property type="project" value="UniProtKB"/>
</dbReference>
<dbReference type="GO" id="GO:0007399">
    <property type="term" value="P:nervous system development"/>
    <property type="evidence" value="ECO:0000318"/>
    <property type="project" value="GO_Central"/>
</dbReference>
<dbReference type="GO" id="GO:0042551">
    <property type="term" value="P:neuron maturation"/>
    <property type="evidence" value="ECO:0000250"/>
    <property type="project" value="UniProtKB"/>
</dbReference>
<dbReference type="GO" id="GO:0006357">
    <property type="term" value="P:regulation of transcription by RNA polymerase II"/>
    <property type="evidence" value="ECO:0000318"/>
    <property type="project" value="GO_Central"/>
</dbReference>
<dbReference type="CDD" id="cd13395">
    <property type="entry name" value="ASKHA_NBD_Arp4_ACTL6-like"/>
    <property type="match status" value="1"/>
</dbReference>
<dbReference type="FunFam" id="3.30.420.40:FF:000796">
    <property type="entry name" value="Actin like 6B"/>
    <property type="match status" value="1"/>
</dbReference>
<dbReference type="FunFam" id="3.90.640.10:FF:000009">
    <property type="entry name" value="Actin-like 6A, isoform CRA_a"/>
    <property type="match status" value="1"/>
</dbReference>
<dbReference type="FunFam" id="2.30.36.70:FF:000005">
    <property type="entry name" value="Actin-like protein 6B"/>
    <property type="match status" value="1"/>
</dbReference>
<dbReference type="FunFam" id="3.30.420.40:FF:000375">
    <property type="entry name" value="Actin-related protein 8"/>
    <property type="match status" value="1"/>
</dbReference>
<dbReference type="FunFam" id="3.30.420.40:FF:000058">
    <property type="entry name" value="Putative actin-related protein 5"/>
    <property type="match status" value="1"/>
</dbReference>
<dbReference type="Gene3D" id="3.30.420.40">
    <property type="match status" value="2"/>
</dbReference>
<dbReference type="Gene3D" id="2.30.36.70">
    <property type="entry name" value="Actin, Chain A, domain 2"/>
    <property type="match status" value="1"/>
</dbReference>
<dbReference type="Gene3D" id="3.90.640.10">
    <property type="entry name" value="Actin, Chain A, domain 4"/>
    <property type="match status" value="1"/>
</dbReference>
<dbReference type="InterPro" id="IPR004000">
    <property type="entry name" value="Actin"/>
</dbReference>
<dbReference type="InterPro" id="IPR004001">
    <property type="entry name" value="Actin_CS"/>
</dbReference>
<dbReference type="InterPro" id="IPR043129">
    <property type="entry name" value="ATPase_NBD"/>
</dbReference>
<dbReference type="PANTHER" id="PTHR11937">
    <property type="entry name" value="ACTIN"/>
    <property type="match status" value="1"/>
</dbReference>
<dbReference type="Pfam" id="PF00022">
    <property type="entry name" value="Actin"/>
    <property type="match status" value="1"/>
</dbReference>
<dbReference type="PRINTS" id="PR00190">
    <property type="entry name" value="ACTIN"/>
</dbReference>
<dbReference type="SMART" id="SM00268">
    <property type="entry name" value="ACTIN"/>
    <property type="match status" value="1"/>
</dbReference>
<dbReference type="SUPFAM" id="SSF53067">
    <property type="entry name" value="Actin-like ATPase domain"/>
    <property type="match status" value="2"/>
</dbReference>
<dbReference type="PROSITE" id="PS00432">
    <property type="entry name" value="ACTINS_2"/>
    <property type="match status" value="1"/>
</dbReference>
<reference key="1">
    <citation type="submission" date="2006-09" db="EMBL/GenBank/DDBJ databases">
        <authorList>
            <consortium name="NIH - Mammalian Gene Collection (MGC) project"/>
        </authorList>
    </citation>
    <scope>NUCLEOTIDE SEQUENCE [LARGE SCALE MRNA]</scope>
    <source>
        <strain>Hereford</strain>
        <tissue>Thalamus</tissue>
    </source>
</reference>
<evidence type="ECO:0000250" key="1">
    <source>
        <dbReference type="UniProtKB" id="O94805"/>
    </source>
</evidence>
<evidence type="ECO:0000250" key="2">
    <source>
        <dbReference type="UniProtKB" id="Q99MR0"/>
    </source>
</evidence>
<evidence type="ECO:0000305" key="3"/>
<comment type="function">
    <text evidence="1 2">Involved in transcriptional activation and repression of select genes by chromatin remodeling (alteration of DNA-nucleosome topology). Component of SWI/SNF chromatin remodeling complexes that carry out key enzymatic activities, changing chromatin structure by altering DNA-histone contacts within a nucleosome in an ATP-dependent manner. Belongs to the neuron-specific chromatin remodeling complex (nBAF complex), as such plays a role in remodeling mononucleosomes in an ATP-dependent fashion, and is required for postmitotic neural development and dendritic outgrowth. During neural development a switch from a stem/progenitor to a postmitotic chromatin remodeling mechanism occurs as neurons exit the cell cycle and become committed to their adult state. The transition from proliferating neural stem/progenitor cells to postmitotic neurons requires a switch in subunit composition of the npBAF and nBAF complexes. As neural progenitors exit mitosis and differentiate into neurons, npBAF complexes which contain ACTL6A/BAF53A and PHF10/BAF45A, are exchanged for homologous alternative ACTL6B/BAF53B and DPF1/BAF45B or DPF3/BAF45C subunits in neuron-specific complexes (nBAF). The npBAF complex is essential for the self-renewal/proliferative capacity of the multipotent neural stem cells. The nBAF complex along with CREST plays a role regulating the activity of genes essential for dendrite growth. ACTL6B/BAF53B is not essential for assembly of the nBAF complex but is required for targeting the complex and CREST to the promoter of genes essential for dendritic growth. Essential for neuronal maturation and dendrite development (By similarity).</text>
</comment>
<comment type="subunit">
    <text evidence="1 2">Component of the multiprotein chromatin-remodeling complexes SWI/SNF: SWI/SNF-A (BAF), SWI/SNF-B (PBAF) and related complexes. The canonical complex contains a catalytic subunit (either SMARCA4/BRG1/BAF190A or SMARCA2/BRM/BAF190B) and at least SMARCE1, ACTL6A/BAF53, SMARCC1/BAF155, SMARCC2/BAF170, and SMARCB1/SNF5/BAF47. Other subunits specific to each of the complexes may also be present permitting several possible combinations developmentally and tissue specific (By similarity). Component of the BAF complex, which includes at least actin (ACTB), ARID1A/BAF250A, ARID1B/BAF250B, SMARCA2/BRM, SMARCA4/BRG1/BAF190A, ACTL6A/BAF53, ACTL6B/BAF53B, SMARCE1/BAF57, SMARCC1/BAF155, SMARCC2/BAF170, SMARCB1/SNF5/INI1, and one or more SMARCD1/BAF60A, SMARCD2/BAF60B, or SMARCD3/BAF60C (By similarity). Component of neuron-specific chromatin remodeling complex (nBAF complex) composed of at least, ARID1A/BAF250A or ARID1B/BAF250B, SMARCD1/BAF60A or SMARCD2/BAF60B or SMARCD3/BAF60C, SMARCA2/BRM/BAF190B, SMARCA4/BRG1/BAF190A, SMARCB1/BAF47, SMARCC1/BAF155, SMARCE1/BAF57, SMARCC2/BAF170, DPF1/BAF45B, DPF3/BAF45C, ACTL6B/BAF53B and actin (ACTB). Note that the nBAF complex is polymorphic in regard to the ATPase, SMARCA2 and SMARCA4 occupying mutually exclusive positions (By similarity). May be a component of the SWI/SNF-B (PBAF) chromatin remodeling complex, at least composed of SMARCA4/BRG1, SMARCB1/BAF47/SNF5, ACTL6A/BAF53A or ACTL6B/BAF53B, SMARCE1/BAF57, SMARCD1/BAF60A, SMARCD2/BAF60B, perhaps SMARCD3/BAF60C, SMARCC1/BAF155, SMARCC2/BAF170, PBRM1/BAF180, ARID2/BAF200 and actin (By similarity).</text>
</comment>
<comment type="subcellular location">
    <subcellularLocation>
        <location evidence="2">Nucleus</location>
    </subcellularLocation>
</comment>
<comment type="similarity">
    <text evidence="3">Belongs to the actin family.</text>
</comment>
<gene>
    <name type="primary">ACTL6B</name>
    <name type="synonym">ACTL6</name>
    <name type="synonym">BAF53B</name>
</gene>
<protein>
    <recommendedName>
        <fullName>Actin-like protein 6B</fullName>
    </recommendedName>
    <alternativeName>
        <fullName>Actin-related protein Baf53b</fullName>
    </alternativeName>
    <alternativeName>
        <fullName>ArpNalpha</fullName>
    </alternativeName>
    <alternativeName>
        <fullName>BRG1-associated factor 53B</fullName>
        <shortName>BAF53B</shortName>
    </alternativeName>
</protein>
<organism>
    <name type="scientific">Bos taurus</name>
    <name type="common">Bovine</name>
    <dbReference type="NCBI Taxonomy" id="9913"/>
    <lineage>
        <taxon>Eukaryota</taxon>
        <taxon>Metazoa</taxon>
        <taxon>Chordata</taxon>
        <taxon>Craniata</taxon>
        <taxon>Vertebrata</taxon>
        <taxon>Euteleostomi</taxon>
        <taxon>Mammalia</taxon>
        <taxon>Eutheria</taxon>
        <taxon>Laurasiatheria</taxon>
        <taxon>Artiodactyla</taxon>
        <taxon>Ruminantia</taxon>
        <taxon>Pecora</taxon>
        <taxon>Bovidae</taxon>
        <taxon>Bovinae</taxon>
        <taxon>Bos</taxon>
    </lineage>
</organism>